<comment type="function">
    <text evidence="1">Catalyzes the reversible isomerization of glucose-6-phosphate to fructose-6-phosphate.</text>
</comment>
<comment type="catalytic activity">
    <reaction evidence="1">
        <text>alpha-D-glucose 6-phosphate = beta-D-fructose 6-phosphate</text>
        <dbReference type="Rhea" id="RHEA:11816"/>
        <dbReference type="ChEBI" id="CHEBI:57634"/>
        <dbReference type="ChEBI" id="CHEBI:58225"/>
        <dbReference type="EC" id="5.3.1.9"/>
    </reaction>
</comment>
<comment type="pathway">
    <text evidence="1">Carbohydrate biosynthesis; gluconeogenesis.</text>
</comment>
<comment type="pathway">
    <text evidence="1">Carbohydrate degradation; glycolysis; D-glyceraldehyde 3-phosphate and glycerone phosphate from D-glucose: step 2/4.</text>
</comment>
<comment type="subcellular location">
    <subcellularLocation>
        <location evidence="1">Cytoplasm</location>
    </subcellularLocation>
</comment>
<comment type="similarity">
    <text evidence="1">Belongs to the GPI family.</text>
</comment>
<keyword id="KW-0963">Cytoplasm</keyword>
<keyword id="KW-0312">Gluconeogenesis</keyword>
<keyword id="KW-0324">Glycolysis</keyword>
<keyword id="KW-0413">Isomerase</keyword>
<keyword id="KW-1185">Reference proteome</keyword>
<dbReference type="EC" id="5.3.1.9" evidence="1"/>
<dbReference type="EMBL" id="CP001013">
    <property type="protein sequence ID" value="ACB35643.1"/>
    <property type="molecule type" value="Genomic_DNA"/>
</dbReference>
<dbReference type="RefSeq" id="WP_012348390.1">
    <property type="nucleotide sequence ID" value="NC_010524.1"/>
</dbReference>
<dbReference type="SMR" id="B1Y2Y7"/>
<dbReference type="STRING" id="395495.Lcho_3385"/>
<dbReference type="KEGG" id="lch:Lcho_3385"/>
<dbReference type="eggNOG" id="COG0166">
    <property type="taxonomic scope" value="Bacteria"/>
</dbReference>
<dbReference type="HOGENOM" id="CLU_017947_3_1_4"/>
<dbReference type="OrthoDB" id="140919at2"/>
<dbReference type="UniPathway" id="UPA00109">
    <property type="reaction ID" value="UER00181"/>
</dbReference>
<dbReference type="UniPathway" id="UPA00138"/>
<dbReference type="Proteomes" id="UP000001693">
    <property type="component" value="Chromosome"/>
</dbReference>
<dbReference type="GO" id="GO:0005829">
    <property type="term" value="C:cytosol"/>
    <property type="evidence" value="ECO:0007669"/>
    <property type="project" value="TreeGrafter"/>
</dbReference>
<dbReference type="GO" id="GO:0097367">
    <property type="term" value="F:carbohydrate derivative binding"/>
    <property type="evidence" value="ECO:0007669"/>
    <property type="project" value="InterPro"/>
</dbReference>
<dbReference type="GO" id="GO:0004347">
    <property type="term" value="F:glucose-6-phosphate isomerase activity"/>
    <property type="evidence" value="ECO:0007669"/>
    <property type="project" value="UniProtKB-UniRule"/>
</dbReference>
<dbReference type="GO" id="GO:0048029">
    <property type="term" value="F:monosaccharide binding"/>
    <property type="evidence" value="ECO:0007669"/>
    <property type="project" value="TreeGrafter"/>
</dbReference>
<dbReference type="GO" id="GO:0006094">
    <property type="term" value="P:gluconeogenesis"/>
    <property type="evidence" value="ECO:0007669"/>
    <property type="project" value="UniProtKB-UniRule"/>
</dbReference>
<dbReference type="GO" id="GO:0051156">
    <property type="term" value="P:glucose 6-phosphate metabolic process"/>
    <property type="evidence" value="ECO:0007669"/>
    <property type="project" value="TreeGrafter"/>
</dbReference>
<dbReference type="GO" id="GO:0006096">
    <property type="term" value="P:glycolytic process"/>
    <property type="evidence" value="ECO:0007669"/>
    <property type="project" value="UniProtKB-UniRule"/>
</dbReference>
<dbReference type="CDD" id="cd05015">
    <property type="entry name" value="SIS_PGI_1"/>
    <property type="match status" value="1"/>
</dbReference>
<dbReference type="CDD" id="cd05016">
    <property type="entry name" value="SIS_PGI_2"/>
    <property type="match status" value="1"/>
</dbReference>
<dbReference type="Gene3D" id="1.10.1390.10">
    <property type="match status" value="1"/>
</dbReference>
<dbReference type="Gene3D" id="3.40.50.10490">
    <property type="entry name" value="Glucose-6-phosphate isomerase like protein, domain 1"/>
    <property type="match status" value="2"/>
</dbReference>
<dbReference type="HAMAP" id="MF_00473">
    <property type="entry name" value="G6P_isomerase"/>
    <property type="match status" value="1"/>
</dbReference>
<dbReference type="InterPro" id="IPR001672">
    <property type="entry name" value="G6P_Isomerase"/>
</dbReference>
<dbReference type="InterPro" id="IPR023096">
    <property type="entry name" value="G6P_Isomerase_C"/>
</dbReference>
<dbReference type="InterPro" id="IPR018189">
    <property type="entry name" value="Phosphoglucose_isomerase_CS"/>
</dbReference>
<dbReference type="InterPro" id="IPR046348">
    <property type="entry name" value="SIS_dom_sf"/>
</dbReference>
<dbReference type="InterPro" id="IPR035476">
    <property type="entry name" value="SIS_PGI_1"/>
</dbReference>
<dbReference type="InterPro" id="IPR035482">
    <property type="entry name" value="SIS_PGI_2"/>
</dbReference>
<dbReference type="NCBIfam" id="NF001211">
    <property type="entry name" value="PRK00179.1"/>
    <property type="match status" value="1"/>
</dbReference>
<dbReference type="PANTHER" id="PTHR11469">
    <property type="entry name" value="GLUCOSE-6-PHOSPHATE ISOMERASE"/>
    <property type="match status" value="1"/>
</dbReference>
<dbReference type="PANTHER" id="PTHR11469:SF1">
    <property type="entry name" value="GLUCOSE-6-PHOSPHATE ISOMERASE"/>
    <property type="match status" value="1"/>
</dbReference>
<dbReference type="Pfam" id="PF00342">
    <property type="entry name" value="PGI"/>
    <property type="match status" value="1"/>
</dbReference>
<dbReference type="PRINTS" id="PR00662">
    <property type="entry name" value="G6PISOMERASE"/>
</dbReference>
<dbReference type="SUPFAM" id="SSF53697">
    <property type="entry name" value="SIS domain"/>
    <property type="match status" value="1"/>
</dbReference>
<dbReference type="PROSITE" id="PS00765">
    <property type="entry name" value="P_GLUCOSE_ISOMERASE_1"/>
    <property type="match status" value="1"/>
</dbReference>
<dbReference type="PROSITE" id="PS00174">
    <property type="entry name" value="P_GLUCOSE_ISOMERASE_2"/>
    <property type="match status" value="1"/>
</dbReference>
<dbReference type="PROSITE" id="PS51463">
    <property type="entry name" value="P_GLUCOSE_ISOMERASE_3"/>
    <property type="match status" value="1"/>
</dbReference>
<organism>
    <name type="scientific">Leptothrix cholodnii (strain ATCC 51168 / LMG 8142 / SP-6)</name>
    <name type="common">Leptothrix discophora (strain SP-6)</name>
    <dbReference type="NCBI Taxonomy" id="395495"/>
    <lineage>
        <taxon>Bacteria</taxon>
        <taxon>Pseudomonadati</taxon>
        <taxon>Pseudomonadota</taxon>
        <taxon>Betaproteobacteria</taxon>
        <taxon>Burkholderiales</taxon>
        <taxon>Sphaerotilaceae</taxon>
        <taxon>Leptothrix</taxon>
    </lineage>
</organism>
<accession>B1Y2Y7</accession>
<reference key="1">
    <citation type="submission" date="2008-03" db="EMBL/GenBank/DDBJ databases">
        <title>Complete sequence of Leptothrix cholodnii SP-6.</title>
        <authorList>
            <consortium name="US DOE Joint Genome Institute"/>
            <person name="Copeland A."/>
            <person name="Lucas S."/>
            <person name="Lapidus A."/>
            <person name="Glavina del Rio T."/>
            <person name="Dalin E."/>
            <person name="Tice H."/>
            <person name="Bruce D."/>
            <person name="Goodwin L."/>
            <person name="Pitluck S."/>
            <person name="Chertkov O."/>
            <person name="Brettin T."/>
            <person name="Detter J.C."/>
            <person name="Han C."/>
            <person name="Kuske C.R."/>
            <person name="Schmutz J."/>
            <person name="Larimer F."/>
            <person name="Land M."/>
            <person name="Hauser L."/>
            <person name="Kyrpides N."/>
            <person name="Lykidis A."/>
            <person name="Emerson D."/>
            <person name="Richardson P."/>
        </authorList>
    </citation>
    <scope>NUCLEOTIDE SEQUENCE [LARGE SCALE GENOMIC DNA]</scope>
    <source>
        <strain>ATCC 51168 / LMG 8142 / SP-6</strain>
    </source>
</reference>
<protein>
    <recommendedName>
        <fullName evidence="1">Glucose-6-phosphate isomerase</fullName>
        <shortName evidence="1">GPI</shortName>
        <ecNumber evidence="1">5.3.1.9</ecNumber>
    </recommendedName>
    <alternativeName>
        <fullName evidence="1">Phosphoglucose isomerase</fullName>
        <shortName evidence="1">PGI</shortName>
    </alternativeName>
    <alternativeName>
        <fullName evidence="1">Phosphohexose isomerase</fullName>
        <shortName evidence="1">PHI</shortName>
    </alternativeName>
</protein>
<gene>
    <name evidence="1" type="primary">pgi</name>
    <name type="ordered locus">Lcho_3385</name>
</gene>
<name>G6PI_LEPCP</name>
<sequence>MNTPRCDQTAAWAALAAHHQGAGRQFDLRTAFGADAGRFDAFSLQAPEVFADLSKNHWDATTRGLLLGLARQCQIESRRDAMLAGEPINHTEGRAVLHTALRAPRGAAPFSDDVHGVLDAMLAYVEQVRDTATSGIKHVVNIGIGGSDLGPQMVVPALDAYAQRGLQLHFVSNVDGHDIAPVLRDLNPRETLVIVASKTFTTQETMANAQVARTWFLAGYGEGGEAAIAKHFAASTTNVAAAAKFGITTTFGFWDWVGGRYSLWSAIGLPIALAVGAENFRALLAGAHAMDRHFATAPLESNLPIQLGLLDVWYRNFLGYTSRSIAPYHQGLRRLPAYLQQLEMESNGKCVDLDGASLPYGTCPVVWGEAGTNGQHAYFQMLHQGTDVIPVEFIAVKTPNHGPDVADELKAGLADQHVKLLANCLAQSQALMLGKTTDDALTDKAPTASTALDALTVARHRTFPGNRPSSTLVLDRLSPASLGALIALYEHRVYTSGALWGINSFDQWGVELGKALCNQLLPRFASGESAGLDASTAGLLARLRG</sequence>
<feature type="chain" id="PRO_1000125738" description="Glucose-6-phosphate isomerase">
    <location>
        <begin position="1"/>
        <end position="545"/>
    </location>
</feature>
<feature type="active site" description="Proton donor" evidence="1">
    <location>
        <position position="345"/>
    </location>
</feature>
<feature type="active site" evidence="1">
    <location>
        <position position="376"/>
    </location>
</feature>
<feature type="active site" evidence="1">
    <location>
        <position position="514"/>
    </location>
</feature>
<proteinExistence type="inferred from homology"/>
<evidence type="ECO:0000255" key="1">
    <source>
        <dbReference type="HAMAP-Rule" id="MF_00473"/>
    </source>
</evidence>